<reference key="1">
    <citation type="journal article" date="2000" name="Nature">
        <title>Sequence and analysis of chromosome 1 of the plant Arabidopsis thaliana.</title>
        <authorList>
            <person name="Theologis A."/>
            <person name="Ecker J.R."/>
            <person name="Palm C.J."/>
            <person name="Federspiel N.A."/>
            <person name="Kaul S."/>
            <person name="White O."/>
            <person name="Alonso J."/>
            <person name="Altafi H."/>
            <person name="Araujo R."/>
            <person name="Bowman C.L."/>
            <person name="Brooks S.Y."/>
            <person name="Buehler E."/>
            <person name="Chan A."/>
            <person name="Chao Q."/>
            <person name="Chen H."/>
            <person name="Cheuk R.F."/>
            <person name="Chin C.W."/>
            <person name="Chung M.K."/>
            <person name="Conn L."/>
            <person name="Conway A.B."/>
            <person name="Conway A.R."/>
            <person name="Creasy T.H."/>
            <person name="Dewar K."/>
            <person name="Dunn P."/>
            <person name="Etgu P."/>
            <person name="Feldblyum T.V."/>
            <person name="Feng J.-D."/>
            <person name="Fong B."/>
            <person name="Fujii C.Y."/>
            <person name="Gill J.E."/>
            <person name="Goldsmith A.D."/>
            <person name="Haas B."/>
            <person name="Hansen N.F."/>
            <person name="Hughes B."/>
            <person name="Huizar L."/>
            <person name="Hunter J.L."/>
            <person name="Jenkins J."/>
            <person name="Johnson-Hopson C."/>
            <person name="Khan S."/>
            <person name="Khaykin E."/>
            <person name="Kim C.J."/>
            <person name="Koo H.L."/>
            <person name="Kremenetskaia I."/>
            <person name="Kurtz D.B."/>
            <person name="Kwan A."/>
            <person name="Lam B."/>
            <person name="Langin-Hooper S."/>
            <person name="Lee A."/>
            <person name="Lee J.M."/>
            <person name="Lenz C.A."/>
            <person name="Li J.H."/>
            <person name="Li Y.-P."/>
            <person name="Lin X."/>
            <person name="Liu S.X."/>
            <person name="Liu Z.A."/>
            <person name="Luros J.S."/>
            <person name="Maiti R."/>
            <person name="Marziali A."/>
            <person name="Militscher J."/>
            <person name="Miranda M."/>
            <person name="Nguyen M."/>
            <person name="Nierman W.C."/>
            <person name="Osborne B.I."/>
            <person name="Pai G."/>
            <person name="Peterson J."/>
            <person name="Pham P.K."/>
            <person name="Rizzo M."/>
            <person name="Rooney T."/>
            <person name="Rowley D."/>
            <person name="Sakano H."/>
            <person name="Salzberg S.L."/>
            <person name="Schwartz J.R."/>
            <person name="Shinn P."/>
            <person name="Southwick A.M."/>
            <person name="Sun H."/>
            <person name="Tallon L.J."/>
            <person name="Tambunga G."/>
            <person name="Toriumi M.J."/>
            <person name="Town C.D."/>
            <person name="Utterback T."/>
            <person name="Van Aken S."/>
            <person name="Vaysberg M."/>
            <person name="Vysotskaia V.S."/>
            <person name="Walker M."/>
            <person name="Wu D."/>
            <person name="Yu G."/>
            <person name="Fraser C.M."/>
            <person name="Venter J.C."/>
            <person name="Davis R.W."/>
        </authorList>
    </citation>
    <scope>NUCLEOTIDE SEQUENCE [LARGE SCALE GENOMIC DNA]</scope>
    <source>
        <strain>cv. Columbia</strain>
    </source>
</reference>
<reference key="2">
    <citation type="journal article" date="2017" name="Plant J.">
        <title>Araport11: a complete reannotation of the Arabidopsis thaliana reference genome.</title>
        <authorList>
            <person name="Cheng C.Y."/>
            <person name="Krishnakumar V."/>
            <person name="Chan A.P."/>
            <person name="Thibaud-Nissen F."/>
            <person name="Schobel S."/>
            <person name="Town C.D."/>
        </authorList>
    </citation>
    <scope>GENOME REANNOTATION</scope>
    <source>
        <strain>cv. Columbia</strain>
    </source>
</reference>
<reference key="3">
    <citation type="submission" date="2005-04" db="EMBL/GenBank/DDBJ databases">
        <title>Arabidopsis cDNA clones.</title>
        <authorList>
            <person name="Shinn P."/>
            <person name="Chen H."/>
            <person name="Cheuk R.F."/>
            <person name="Kim C.J."/>
            <person name="Ecker J.R."/>
        </authorList>
    </citation>
    <scope>NUCLEOTIDE SEQUENCE [LARGE SCALE MRNA]</scope>
    <source>
        <strain>cv. Columbia</strain>
    </source>
</reference>
<reference key="4">
    <citation type="submission" date="2006-07" db="EMBL/GenBank/DDBJ databases">
        <title>Large-scale analysis of RIKEN Arabidopsis full-length (RAFL) cDNAs.</title>
        <authorList>
            <person name="Totoki Y."/>
            <person name="Seki M."/>
            <person name="Ishida J."/>
            <person name="Nakajima M."/>
            <person name="Enju A."/>
            <person name="Kamiya A."/>
            <person name="Narusaka M."/>
            <person name="Shin-i T."/>
            <person name="Nakagawa M."/>
            <person name="Sakamoto N."/>
            <person name="Oishi K."/>
            <person name="Kohara Y."/>
            <person name="Kobayashi M."/>
            <person name="Toyoda A."/>
            <person name="Sakaki Y."/>
            <person name="Sakurai T."/>
            <person name="Iida K."/>
            <person name="Akiyama K."/>
            <person name="Satou M."/>
            <person name="Toyoda T."/>
            <person name="Konagaya A."/>
            <person name="Carninci P."/>
            <person name="Kawai J."/>
            <person name="Hayashizaki Y."/>
            <person name="Shinozaki K."/>
        </authorList>
    </citation>
    <scope>NUCLEOTIDE SEQUENCE [LARGE SCALE MRNA]</scope>
    <source>
        <strain>cv. Columbia</strain>
    </source>
</reference>
<reference key="5">
    <citation type="journal article" date="2013" name="J. Exp. Bot.">
        <title>The CEP family in land plants: evolutionary analyses, expression studies, and role in Arabidopsis shoot development.</title>
        <authorList>
            <person name="Roberts I."/>
            <person name="Smith S."/>
            <person name="De Rybel B."/>
            <person name="Van Den Broeke J."/>
            <person name="Smet W."/>
            <person name="De Cokere S."/>
            <person name="Mispelaere M."/>
            <person name="De Smet I."/>
            <person name="Beeckman T."/>
        </authorList>
    </citation>
    <scope>GENE FAMILY</scope>
    <source>
        <strain>cv. Columbia</strain>
    </source>
</reference>
<reference key="6">
    <citation type="journal article" date="2013" name="J. Exp. Bot.">
        <title>CEP genes regulate root and shoot development in response to environmental cues and are specific to seed plants.</title>
        <authorList>
            <person name="Delay C."/>
            <person name="Imin N."/>
            <person name="Djordjevic M.A."/>
        </authorList>
    </citation>
    <scope>INDUCTION BY OSMOTIC STRESS AND CARBON DIOXIDE</scope>
    <scope>GENE FAMILY</scope>
    <scope>NOMENCLATURE</scope>
    <source>
        <strain>cv. Columbia</strain>
    </source>
</reference>
<comment type="function">
    <text evidence="3">Extracellular signaling peptide that may regulate primary root growth rate and systemic nitrogen (N)-demand signaling.</text>
</comment>
<comment type="subunit">
    <text evidence="3">Interacts with CEP receptors (e.g. CEPR1 and CEPR2).</text>
</comment>
<comment type="subcellular location">
    <molecule>C-terminally encoded peptide 14</molecule>
    <subcellularLocation>
        <location evidence="1">Secreted</location>
        <location evidence="1">Extracellular space</location>
        <location evidence="1">Apoplast</location>
    </subcellularLocation>
    <text evidence="1">Accumulates in xylem sap.</text>
</comment>
<comment type="induction">
    <text evidence="7">Slightly repressed in roots by carbon dioxide CO(2). Induced in shoots by osmotic stress (e.g. mannitol).</text>
</comment>
<comment type="PTM">
    <text evidence="3">The mature small signaling peptide is generated by proteolytic processing of the longer precursor.</text>
</comment>
<comment type="similarity">
    <text evidence="9">Belongs to the C-terminally encoded plant signaling peptide (CEP) family.</text>
</comment>
<keyword id="KW-0052">Apoplast</keyword>
<keyword id="KW-0217">Developmental protein</keyword>
<keyword id="KW-0325">Glycoprotein</keyword>
<keyword id="KW-0372">Hormone</keyword>
<keyword id="KW-0379">Hydroxylation</keyword>
<keyword id="KW-1185">Reference proteome</keyword>
<keyword id="KW-0964">Secreted</keyword>
<keyword id="KW-0732">Signal</keyword>
<proteinExistence type="evidence at transcript level"/>
<gene>
    <name evidence="8" type="primary">CEP14</name>
    <name evidence="10" type="ordered locus">At1g29290</name>
    <name evidence="11" type="ORF">F28N24.30</name>
</gene>
<sequence length="107" mass="11762">MAVRLIPTIWLFIVFAVIVSALPSLVSSRKLLEVKKQENLTVREEEKSHMPHVTKTSTLSALPKGKIPNSTPSKKGHAAVFAGKLRSRHLSTVDRYLRSVPSPGVGH</sequence>
<feature type="signal peptide" evidence="4">
    <location>
        <begin position="1"/>
        <end position="21"/>
    </location>
</feature>
<feature type="propeptide" id="PRO_0000440012" evidence="9">
    <location>
        <begin position="22"/>
        <end position="92"/>
    </location>
</feature>
<feature type="peptide" id="PRO_0000440013" description="C-terminally encoded peptide 14" evidence="2">
    <location>
        <begin position="93"/>
        <end position="107"/>
    </location>
</feature>
<feature type="region of interest" description="Disordered" evidence="6">
    <location>
        <begin position="43"/>
        <end position="76"/>
    </location>
</feature>
<feature type="modified residue" description="Hydroxyproline" evidence="2">
    <location>
        <position position="101"/>
    </location>
</feature>
<feature type="modified residue" description="Hydroxyproline" evidence="3">
    <location>
        <position position="103"/>
    </location>
</feature>
<feature type="glycosylation site" description="N-linked (GlcNAc...) asparagine" evidence="5">
    <location>
        <position position="39"/>
    </location>
</feature>
<organism>
    <name type="scientific">Arabidopsis thaliana</name>
    <name type="common">Mouse-ear cress</name>
    <dbReference type="NCBI Taxonomy" id="3702"/>
    <lineage>
        <taxon>Eukaryota</taxon>
        <taxon>Viridiplantae</taxon>
        <taxon>Streptophyta</taxon>
        <taxon>Embryophyta</taxon>
        <taxon>Tracheophyta</taxon>
        <taxon>Spermatophyta</taxon>
        <taxon>Magnoliopsida</taxon>
        <taxon>eudicotyledons</taxon>
        <taxon>Gunneridae</taxon>
        <taxon>Pentapetalae</taxon>
        <taxon>rosids</taxon>
        <taxon>malvids</taxon>
        <taxon>Brassicales</taxon>
        <taxon>Brassicaceae</taxon>
        <taxon>Camelineae</taxon>
        <taxon>Arabidopsis</taxon>
    </lineage>
</organism>
<protein>
    <recommendedName>
        <fullName evidence="8">Precursor of CEP14</fullName>
        <shortName evidence="8">PCEP14</shortName>
    </recommendedName>
    <component>
        <recommendedName>
            <fullName evidence="8">C-terminally encoded peptide 14</fullName>
            <shortName evidence="8">CEP14</shortName>
        </recommendedName>
    </component>
</protein>
<evidence type="ECO:0000250" key="1">
    <source>
        <dbReference type="UniProtKB" id="O80460"/>
    </source>
</evidence>
<evidence type="ECO:0000250" key="2">
    <source>
        <dbReference type="UniProtKB" id="Q058G9"/>
    </source>
</evidence>
<evidence type="ECO:0000250" key="3">
    <source>
        <dbReference type="UniProtKB" id="Q8L8Y3"/>
    </source>
</evidence>
<evidence type="ECO:0000255" key="4"/>
<evidence type="ECO:0000255" key="5">
    <source>
        <dbReference type="PROSITE-ProRule" id="PRU00498"/>
    </source>
</evidence>
<evidence type="ECO:0000256" key="6">
    <source>
        <dbReference type="SAM" id="MobiDB-lite"/>
    </source>
</evidence>
<evidence type="ECO:0000269" key="7">
    <source>
    </source>
</evidence>
<evidence type="ECO:0000303" key="8">
    <source>
    </source>
</evidence>
<evidence type="ECO:0000305" key="9"/>
<evidence type="ECO:0000312" key="10">
    <source>
        <dbReference type="Araport" id="AT1G29290"/>
    </source>
</evidence>
<evidence type="ECO:0000312" key="11">
    <source>
        <dbReference type="EMBL" id="AEE31069.1"/>
    </source>
</evidence>
<dbReference type="EMBL" id="AC021043">
    <property type="status" value="NOT_ANNOTATED_CDS"/>
    <property type="molecule type" value="Genomic_DNA"/>
</dbReference>
<dbReference type="EMBL" id="CP002684">
    <property type="protein sequence ID" value="AEE31069.1"/>
    <property type="molecule type" value="Genomic_DNA"/>
</dbReference>
<dbReference type="EMBL" id="BT021973">
    <property type="protein sequence ID" value="AAY17410.1"/>
    <property type="molecule type" value="mRNA"/>
</dbReference>
<dbReference type="EMBL" id="AK229062">
    <property type="protein sequence ID" value="BAF00944.1"/>
    <property type="molecule type" value="mRNA"/>
</dbReference>
<dbReference type="RefSeq" id="NP_001319106.1">
    <property type="nucleotide sequence ID" value="NM_001332843.1"/>
</dbReference>
<dbReference type="SMR" id="Q52K95"/>
<dbReference type="FunCoup" id="Q52K95">
    <property type="interactions" value="2"/>
</dbReference>
<dbReference type="STRING" id="3702.Q52K95"/>
<dbReference type="GlyCosmos" id="Q52K95">
    <property type="glycosylation" value="1 site, No reported glycans"/>
</dbReference>
<dbReference type="GlyGen" id="Q52K95">
    <property type="glycosylation" value="1 site"/>
</dbReference>
<dbReference type="PaxDb" id="3702-AT1G29290.1"/>
<dbReference type="EnsemblPlants" id="AT1G29290.1">
    <property type="protein sequence ID" value="AT1G29290.1"/>
    <property type="gene ID" value="AT1G29290"/>
</dbReference>
<dbReference type="GeneID" id="28717277"/>
<dbReference type="Gramene" id="AT1G29290.1">
    <property type="protein sequence ID" value="AT1G29290.1"/>
    <property type="gene ID" value="AT1G29290"/>
</dbReference>
<dbReference type="KEGG" id="ath:AT1G29290"/>
<dbReference type="Araport" id="AT1G29290"/>
<dbReference type="TAIR" id="AT1G29290"/>
<dbReference type="eggNOG" id="ENOG502S78T">
    <property type="taxonomic scope" value="Eukaryota"/>
</dbReference>
<dbReference type="HOGENOM" id="CLU_176522_0_0_1"/>
<dbReference type="InParanoid" id="Q52K95"/>
<dbReference type="OMA" id="AFAWSTE"/>
<dbReference type="OrthoDB" id="1915362at2759"/>
<dbReference type="PhylomeDB" id="Q52K95"/>
<dbReference type="PRO" id="PR:Q52K95"/>
<dbReference type="Proteomes" id="UP000006548">
    <property type="component" value="Chromosome 1"/>
</dbReference>
<dbReference type="ExpressionAtlas" id="Q52K95">
    <property type="expression patterns" value="baseline and differential"/>
</dbReference>
<dbReference type="GO" id="GO:0048046">
    <property type="term" value="C:apoplast"/>
    <property type="evidence" value="ECO:0000250"/>
    <property type="project" value="UniProtKB"/>
</dbReference>
<dbReference type="GO" id="GO:0005179">
    <property type="term" value="F:hormone activity"/>
    <property type="evidence" value="ECO:0000250"/>
    <property type="project" value="UniProtKB"/>
</dbReference>
<dbReference type="GO" id="GO:0006995">
    <property type="term" value="P:cellular response to nitrogen starvation"/>
    <property type="evidence" value="ECO:0007669"/>
    <property type="project" value="InterPro"/>
</dbReference>
<dbReference type="GO" id="GO:1902025">
    <property type="term" value="P:nitrate import"/>
    <property type="evidence" value="ECO:0000250"/>
    <property type="project" value="UniProtKB"/>
</dbReference>
<dbReference type="GO" id="GO:2000280">
    <property type="term" value="P:regulation of root development"/>
    <property type="evidence" value="ECO:0000250"/>
    <property type="project" value="UniProtKB"/>
</dbReference>
<dbReference type="GO" id="GO:0010037">
    <property type="term" value="P:response to carbon dioxide"/>
    <property type="evidence" value="ECO:0000270"/>
    <property type="project" value="UniProtKB"/>
</dbReference>
<dbReference type="GO" id="GO:0006970">
    <property type="term" value="P:response to osmotic stress"/>
    <property type="evidence" value="ECO:0000270"/>
    <property type="project" value="UniProtKB"/>
</dbReference>
<dbReference type="InterPro" id="IPR038930">
    <property type="entry name" value="CEP13/CEP14"/>
</dbReference>
<dbReference type="PANTHER" id="PTHR37180">
    <property type="entry name" value="PRECURSOR OF CEP14"/>
    <property type="match status" value="1"/>
</dbReference>
<dbReference type="PANTHER" id="PTHR37180:SF2">
    <property type="entry name" value="PRECURSOR OF CEP14"/>
    <property type="match status" value="1"/>
</dbReference>
<name>PCP14_ARATH</name>
<accession>Q52K95</accession>